<organism>
    <name type="scientific">Shewanella halifaxensis (strain HAW-EB4)</name>
    <dbReference type="NCBI Taxonomy" id="458817"/>
    <lineage>
        <taxon>Bacteria</taxon>
        <taxon>Pseudomonadati</taxon>
        <taxon>Pseudomonadota</taxon>
        <taxon>Gammaproteobacteria</taxon>
        <taxon>Alteromonadales</taxon>
        <taxon>Shewanellaceae</taxon>
        <taxon>Shewanella</taxon>
    </lineage>
</organism>
<name>GUAC_SHEHH</name>
<feature type="chain" id="PRO_1000082441" description="GMP reductase">
    <location>
        <begin position="1"/>
        <end position="347"/>
    </location>
</feature>
<feature type="active site" description="Thioimidate intermediate" evidence="1">
    <location>
        <position position="186"/>
    </location>
</feature>
<feature type="binding site" evidence="1">
    <location>
        <begin position="108"/>
        <end position="131"/>
    </location>
    <ligand>
        <name>NADP(+)</name>
        <dbReference type="ChEBI" id="CHEBI:58349"/>
    </ligand>
</feature>
<feature type="binding site" evidence="1">
    <location>
        <position position="181"/>
    </location>
    <ligand>
        <name>K(+)</name>
        <dbReference type="ChEBI" id="CHEBI:29103"/>
    </ligand>
</feature>
<feature type="binding site" evidence="1">
    <location>
        <position position="183"/>
    </location>
    <ligand>
        <name>K(+)</name>
        <dbReference type="ChEBI" id="CHEBI:29103"/>
    </ligand>
</feature>
<feature type="binding site" evidence="1">
    <location>
        <begin position="216"/>
        <end position="239"/>
    </location>
    <ligand>
        <name>NADP(+)</name>
        <dbReference type="ChEBI" id="CHEBI:58349"/>
    </ligand>
</feature>
<proteinExistence type="inferred from homology"/>
<comment type="function">
    <text evidence="1">Catalyzes the irreversible NADPH-dependent deamination of GMP to IMP. It functions in the conversion of nucleobase, nucleoside and nucleotide derivatives of G to A nucleotides, and in maintaining the intracellular balance of A and G nucleotides.</text>
</comment>
<comment type="catalytic activity">
    <reaction evidence="1">
        <text>IMP + NH4(+) + NADP(+) = GMP + NADPH + 2 H(+)</text>
        <dbReference type="Rhea" id="RHEA:17185"/>
        <dbReference type="ChEBI" id="CHEBI:15378"/>
        <dbReference type="ChEBI" id="CHEBI:28938"/>
        <dbReference type="ChEBI" id="CHEBI:57783"/>
        <dbReference type="ChEBI" id="CHEBI:58053"/>
        <dbReference type="ChEBI" id="CHEBI:58115"/>
        <dbReference type="ChEBI" id="CHEBI:58349"/>
        <dbReference type="EC" id="1.7.1.7"/>
    </reaction>
</comment>
<comment type="subunit">
    <text evidence="1">Homotetramer.</text>
</comment>
<comment type="similarity">
    <text evidence="1">Belongs to the IMPDH/GMPR family. GuaC type 1 subfamily.</text>
</comment>
<sequence>MRIEQDLKLGFKDVLIRPKRSTLKSRSQVDLNRQFTFKHSGKTWSGVPIIAANMDSVASFKMAISLAKHNVMTAVHKHYSVEQWGEFVSSQTADVLKHVMVSSGTSDADFIKLSEILAMSEELNFICIDIANGYSEHLVDYVRKVRQAHPQAVISAGNVVTGDMVEELIIAGADIVKVGIGPGSVCTTRVKTGVGYPQLSAIIECADAAHGLGGQIIGDGGCSCAGDVAKAFGGGADFVMLGGMLAGHEQSGGEVIEQDGKMMVKFYGMSSQSAMDKHSGGVAKYRAAEGKTVLLPFRGSVDNTINDIMGGVRSTCTYVGAASLKELTKRTTFIRVQEQENNVYGKE</sequence>
<keyword id="KW-0479">Metal-binding</keyword>
<keyword id="KW-0521">NADP</keyword>
<keyword id="KW-0560">Oxidoreductase</keyword>
<keyword id="KW-0630">Potassium</keyword>
<dbReference type="EC" id="1.7.1.7" evidence="1"/>
<dbReference type="EMBL" id="CP000931">
    <property type="protein sequence ID" value="ABZ78821.1"/>
    <property type="molecule type" value="Genomic_DNA"/>
</dbReference>
<dbReference type="RefSeq" id="WP_012279325.1">
    <property type="nucleotide sequence ID" value="NC_010334.1"/>
</dbReference>
<dbReference type="SMR" id="B0TQE1"/>
<dbReference type="STRING" id="458817.Shal_4281"/>
<dbReference type="KEGG" id="shl:Shal_4281"/>
<dbReference type="eggNOG" id="COG0516">
    <property type="taxonomic scope" value="Bacteria"/>
</dbReference>
<dbReference type="HOGENOM" id="CLU_022552_5_3_6"/>
<dbReference type="OrthoDB" id="9805398at2"/>
<dbReference type="Proteomes" id="UP000001317">
    <property type="component" value="Chromosome"/>
</dbReference>
<dbReference type="GO" id="GO:0005829">
    <property type="term" value="C:cytosol"/>
    <property type="evidence" value="ECO:0007669"/>
    <property type="project" value="TreeGrafter"/>
</dbReference>
<dbReference type="GO" id="GO:1902560">
    <property type="term" value="C:GMP reductase complex"/>
    <property type="evidence" value="ECO:0007669"/>
    <property type="project" value="InterPro"/>
</dbReference>
<dbReference type="GO" id="GO:0003920">
    <property type="term" value="F:GMP reductase activity"/>
    <property type="evidence" value="ECO:0007669"/>
    <property type="project" value="UniProtKB-UniRule"/>
</dbReference>
<dbReference type="GO" id="GO:0046872">
    <property type="term" value="F:metal ion binding"/>
    <property type="evidence" value="ECO:0007669"/>
    <property type="project" value="UniProtKB-KW"/>
</dbReference>
<dbReference type="GO" id="GO:0006163">
    <property type="term" value="P:purine nucleotide metabolic process"/>
    <property type="evidence" value="ECO:0007669"/>
    <property type="project" value="UniProtKB-UniRule"/>
</dbReference>
<dbReference type="CDD" id="cd00381">
    <property type="entry name" value="IMPDH"/>
    <property type="match status" value="1"/>
</dbReference>
<dbReference type="FunFam" id="3.20.20.70:FF:000012">
    <property type="entry name" value="GMP reductase"/>
    <property type="match status" value="1"/>
</dbReference>
<dbReference type="Gene3D" id="3.20.20.70">
    <property type="entry name" value="Aldolase class I"/>
    <property type="match status" value="1"/>
</dbReference>
<dbReference type="HAMAP" id="MF_00596">
    <property type="entry name" value="GMP_reduct_type1"/>
    <property type="match status" value="1"/>
</dbReference>
<dbReference type="InterPro" id="IPR013785">
    <property type="entry name" value="Aldolase_TIM"/>
</dbReference>
<dbReference type="InterPro" id="IPR050139">
    <property type="entry name" value="GMP_reductase"/>
</dbReference>
<dbReference type="InterPro" id="IPR005993">
    <property type="entry name" value="GMPR"/>
</dbReference>
<dbReference type="InterPro" id="IPR015875">
    <property type="entry name" value="IMP_DH/GMP_Rdtase_CS"/>
</dbReference>
<dbReference type="InterPro" id="IPR001093">
    <property type="entry name" value="IMP_DH_GMPRt"/>
</dbReference>
<dbReference type="NCBIfam" id="TIGR01305">
    <property type="entry name" value="GMP_reduct_1"/>
    <property type="match status" value="1"/>
</dbReference>
<dbReference type="NCBIfam" id="NF003470">
    <property type="entry name" value="PRK05096.1"/>
    <property type="match status" value="1"/>
</dbReference>
<dbReference type="PANTHER" id="PTHR43170">
    <property type="entry name" value="GMP REDUCTASE"/>
    <property type="match status" value="1"/>
</dbReference>
<dbReference type="PANTHER" id="PTHR43170:SF5">
    <property type="entry name" value="GMP REDUCTASE"/>
    <property type="match status" value="1"/>
</dbReference>
<dbReference type="Pfam" id="PF00478">
    <property type="entry name" value="IMPDH"/>
    <property type="match status" value="1"/>
</dbReference>
<dbReference type="PIRSF" id="PIRSF000235">
    <property type="entry name" value="GMP_reductase"/>
    <property type="match status" value="1"/>
</dbReference>
<dbReference type="SMART" id="SM01240">
    <property type="entry name" value="IMPDH"/>
    <property type="match status" value="1"/>
</dbReference>
<dbReference type="SUPFAM" id="SSF51412">
    <property type="entry name" value="Inosine monophosphate dehydrogenase (IMPDH)"/>
    <property type="match status" value="1"/>
</dbReference>
<dbReference type="PROSITE" id="PS00487">
    <property type="entry name" value="IMP_DH_GMP_RED"/>
    <property type="match status" value="1"/>
</dbReference>
<gene>
    <name evidence="1" type="primary">guaC</name>
    <name type="ordered locus">Shal_4281</name>
</gene>
<evidence type="ECO:0000255" key="1">
    <source>
        <dbReference type="HAMAP-Rule" id="MF_00596"/>
    </source>
</evidence>
<accession>B0TQE1</accession>
<protein>
    <recommendedName>
        <fullName evidence="1">GMP reductase</fullName>
        <ecNumber evidence="1">1.7.1.7</ecNumber>
    </recommendedName>
    <alternativeName>
        <fullName evidence="1">Guanosine 5'-monophosphate oxidoreductase</fullName>
        <shortName evidence="1">Guanosine monophosphate reductase</shortName>
    </alternativeName>
</protein>
<reference key="1">
    <citation type="submission" date="2008-01" db="EMBL/GenBank/DDBJ databases">
        <title>Complete sequence of Shewanella halifaxensis HAW-EB4.</title>
        <authorList>
            <consortium name="US DOE Joint Genome Institute"/>
            <person name="Copeland A."/>
            <person name="Lucas S."/>
            <person name="Lapidus A."/>
            <person name="Glavina del Rio T."/>
            <person name="Dalin E."/>
            <person name="Tice H."/>
            <person name="Bruce D."/>
            <person name="Goodwin L."/>
            <person name="Pitluck S."/>
            <person name="Sims D."/>
            <person name="Brettin T."/>
            <person name="Detter J.C."/>
            <person name="Han C."/>
            <person name="Kuske C.R."/>
            <person name="Schmutz J."/>
            <person name="Larimer F."/>
            <person name="Land M."/>
            <person name="Hauser L."/>
            <person name="Kyrpides N."/>
            <person name="Kim E."/>
            <person name="Zhao J.-S."/>
            <person name="Richardson P."/>
        </authorList>
    </citation>
    <scope>NUCLEOTIDE SEQUENCE [LARGE SCALE GENOMIC DNA]</scope>
    <source>
        <strain>HAW-EB4</strain>
    </source>
</reference>